<accession>Q22811</accession>
<accession>Q8WQE1</accession>
<keyword id="KW-0238">DNA-binding</keyword>
<keyword id="KW-0371">Homeobox</keyword>
<keyword id="KW-0539">Nucleus</keyword>
<keyword id="KW-1185">Reference proteome</keyword>
<keyword id="KW-0804">Transcription</keyword>
<keyword id="KW-0805">Transcription regulation</keyword>
<protein>
    <recommendedName>
        <fullName>Homeobox protein ceh-21</fullName>
    </recommendedName>
</protein>
<name>HM21_CAEEL</name>
<proteinExistence type="evidence at transcript level"/>
<evidence type="ECO:0000250" key="1"/>
<evidence type="ECO:0000255" key="2">
    <source>
        <dbReference type="PROSITE-ProRule" id="PRU00108"/>
    </source>
</evidence>
<evidence type="ECO:0000255" key="3">
    <source>
        <dbReference type="PROSITE-ProRule" id="PRU00374"/>
    </source>
</evidence>
<evidence type="ECO:0000256" key="4">
    <source>
        <dbReference type="SAM" id="MobiDB-lite"/>
    </source>
</evidence>
<evidence type="ECO:0000305" key="5"/>
<comment type="function">
    <text evidence="1">Probable DNA-binding regulatory protein involved in cell-fate specification.</text>
</comment>
<comment type="subcellular location">
    <subcellularLocation>
        <location evidence="2 3">Nucleus</location>
    </subcellularLocation>
</comment>
<comment type="similarity">
    <text evidence="5">Belongs to the CUT homeobox family.</text>
</comment>
<reference key="1">
    <citation type="journal article" date="2002" name="Int. J. Dev. Biol.">
        <title>Loss and gain of domains during evolution of cut superclass homeobox genes.</title>
        <authorList>
            <person name="Buerglin T.R."/>
            <person name="Cassata G."/>
        </authorList>
    </citation>
    <scope>NUCLEOTIDE SEQUENCE [MRNA]</scope>
    <source>
        <strain>Bristol N2</strain>
    </source>
</reference>
<reference key="2">
    <citation type="journal article" date="1998" name="Science">
        <title>Genome sequence of the nematode C. elegans: a platform for investigating biology.</title>
        <authorList>
            <consortium name="The C. elegans sequencing consortium"/>
        </authorList>
    </citation>
    <scope>NUCLEOTIDE SEQUENCE [LARGE SCALE GENOMIC DNA]</scope>
    <source>
        <strain>Bristol N2</strain>
    </source>
</reference>
<reference key="3">
    <citation type="journal article" date="1998" name="J. Biol. Chem.">
        <title>Isoforms of hepatocyte nuclear factor-6 differ in DNA-binding properties, contain a bifunctional homeodomain, and define the new ONECUT class of homeodomain proteins.</title>
        <authorList>
            <person name="Lannoy V.J."/>
            <person name="Buerglin T.R."/>
            <person name="Rousseau G.G."/>
            <person name="Lemaigre F.P."/>
        </authorList>
    </citation>
    <scope>NUCLEOTIDE SEQUENCE [MRNA] OF 313-495</scope>
    <source>
        <strain>Bristol N2</strain>
    </source>
</reference>
<feature type="chain" id="PRO_0000202408" description="Homeobox protein ceh-21">
    <location>
        <begin position="1"/>
        <end position="495"/>
    </location>
</feature>
<feature type="DNA-binding region" description="CUT" evidence="3">
    <location>
        <begin position="284"/>
        <end position="370"/>
    </location>
</feature>
<feature type="DNA-binding region" description="Homeobox" evidence="2">
    <location>
        <begin position="389"/>
        <end position="449"/>
    </location>
</feature>
<feature type="region of interest" description="Disordered" evidence="4">
    <location>
        <begin position="1"/>
        <end position="24"/>
    </location>
</feature>
<feature type="region of interest" description="Disordered" evidence="4">
    <location>
        <begin position="89"/>
        <end position="267"/>
    </location>
</feature>
<feature type="region of interest" description="Disordered" evidence="4">
    <location>
        <begin position="450"/>
        <end position="473"/>
    </location>
</feature>
<feature type="compositionally biased region" description="Polar residues" evidence="4">
    <location>
        <begin position="1"/>
        <end position="14"/>
    </location>
</feature>
<feature type="compositionally biased region" description="Basic and acidic residues" evidence="4">
    <location>
        <begin position="106"/>
        <end position="120"/>
    </location>
</feature>
<feature type="compositionally biased region" description="Acidic residues" evidence="4">
    <location>
        <begin position="132"/>
        <end position="145"/>
    </location>
</feature>
<feature type="compositionally biased region" description="Basic and acidic residues" evidence="4">
    <location>
        <begin position="149"/>
        <end position="162"/>
    </location>
</feature>
<feature type="compositionally biased region" description="Polar residues" evidence="4">
    <location>
        <begin position="163"/>
        <end position="179"/>
    </location>
</feature>
<feature type="compositionally biased region" description="Polar residues" evidence="4">
    <location>
        <begin position="199"/>
        <end position="217"/>
    </location>
</feature>
<feature type="compositionally biased region" description="Low complexity" evidence="4">
    <location>
        <begin position="218"/>
        <end position="233"/>
    </location>
</feature>
<feature type="compositionally biased region" description="Basic and acidic residues" evidence="4">
    <location>
        <begin position="242"/>
        <end position="254"/>
    </location>
</feature>
<feature type="compositionally biased region" description="Acidic residues" evidence="4">
    <location>
        <begin position="464"/>
        <end position="473"/>
    </location>
</feature>
<dbReference type="EMBL" id="AJ427855">
    <property type="protein sequence ID" value="CAD20808.1"/>
    <property type="molecule type" value="mRNA"/>
</dbReference>
<dbReference type="EMBL" id="FO080541">
    <property type="protein sequence ID" value="CCD64528.1"/>
    <property type="molecule type" value="Genomic_DNA"/>
</dbReference>
<dbReference type="EMBL" id="AF023470">
    <property type="protein sequence ID" value="AAB86814.1"/>
    <property type="molecule type" value="mRNA"/>
</dbReference>
<dbReference type="PIR" id="T28912">
    <property type="entry name" value="T28912"/>
</dbReference>
<dbReference type="PIR" id="T42240">
    <property type="entry name" value="T42240"/>
</dbReference>
<dbReference type="RefSeq" id="NP_001379670.1">
    <property type="nucleotide sequence ID" value="NM_001392732.1"/>
</dbReference>
<dbReference type="RefSeq" id="NP_508341.2">
    <property type="nucleotide sequence ID" value="NM_075940.5"/>
</dbReference>
<dbReference type="SMR" id="Q22811"/>
<dbReference type="BioGRID" id="45451">
    <property type="interactions" value="2"/>
</dbReference>
<dbReference type="FunCoup" id="Q22811">
    <property type="interactions" value="99"/>
</dbReference>
<dbReference type="IntAct" id="Q22811">
    <property type="interactions" value="2"/>
</dbReference>
<dbReference type="STRING" id="6239.T26C11.6.1"/>
<dbReference type="PaxDb" id="6239-T26C11.6"/>
<dbReference type="EnsemblMetazoa" id="T26C11.6.1">
    <property type="protein sequence ID" value="T26C11.6.1"/>
    <property type="gene ID" value="WBGene00000444"/>
</dbReference>
<dbReference type="GeneID" id="180504"/>
<dbReference type="UCSC" id="T26C11.6.2">
    <property type="organism name" value="c. elegans"/>
</dbReference>
<dbReference type="AGR" id="WB:WBGene00000444"/>
<dbReference type="WormBase" id="T26C11.6">
    <property type="protein sequence ID" value="CE29823"/>
    <property type="gene ID" value="WBGene00000444"/>
    <property type="gene designation" value="ceh-21"/>
</dbReference>
<dbReference type="eggNOG" id="KOG2252">
    <property type="taxonomic scope" value="Eukaryota"/>
</dbReference>
<dbReference type="GeneTree" id="ENSGT00950000183103"/>
<dbReference type="HOGENOM" id="CLU_551232_0_0_1"/>
<dbReference type="InParanoid" id="Q22811"/>
<dbReference type="OrthoDB" id="10068888at2759"/>
<dbReference type="PRO" id="PR:Q22811"/>
<dbReference type="Proteomes" id="UP000001940">
    <property type="component" value="Chromosome X"/>
</dbReference>
<dbReference type="Bgee" id="WBGene00000444">
    <property type="expression patterns" value="Expressed in embryo and 4 other cell types or tissues"/>
</dbReference>
<dbReference type="GO" id="GO:0005634">
    <property type="term" value="C:nucleus"/>
    <property type="evidence" value="ECO:0000318"/>
    <property type="project" value="GO_Central"/>
</dbReference>
<dbReference type="GO" id="GO:0000981">
    <property type="term" value="F:DNA-binding transcription factor activity, RNA polymerase II-specific"/>
    <property type="evidence" value="ECO:0000318"/>
    <property type="project" value="GO_Central"/>
</dbReference>
<dbReference type="GO" id="GO:0000978">
    <property type="term" value="F:RNA polymerase II cis-regulatory region sequence-specific DNA binding"/>
    <property type="evidence" value="ECO:0000318"/>
    <property type="project" value="GO_Central"/>
</dbReference>
<dbReference type="GO" id="GO:0006357">
    <property type="term" value="P:regulation of transcription by RNA polymerase II"/>
    <property type="evidence" value="ECO:0000318"/>
    <property type="project" value="GO_Central"/>
</dbReference>
<dbReference type="CDD" id="cd00086">
    <property type="entry name" value="homeodomain"/>
    <property type="match status" value="1"/>
</dbReference>
<dbReference type="FunFam" id="1.10.260.40:FF:000005">
    <property type="entry name" value="One cut domain family member"/>
    <property type="match status" value="1"/>
</dbReference>
<dbReference type="Gene3D" id="1.10.10.60">
    <property type="entry name" value="Homeodomain-like"/>
    <property type="match status" value="1"/>
</dbReference>
<dbReference type="Gene3D" id="1.10.260.40">
    <property type="entry name" value="lambda repressor-like DNA-binding domains"/>
    <property type="match status" value="1"/>
</dbReference>
<dbReference type="InterPro" id="IPR003350">
    <property type="entry name" value="CUT_dom"/>
</dbReference>
<dbReference type="InterPro" id="IPR051649">
    <property type="entry name" value="CUT_Homeobox"/>
</dbReference>
<dbReference type="InterPro" id="IPR001356">
    <property type="entry name" value="HD"/>
</dbReference>
<dbReference type="InterPro" id="IPR009057">
    <property type="entry name" value="Homeodomain-like_sf"/>
</dbReference>
<dbReference type="InterPro" id="IPR010982">
    <property type="entry name" value="Lambda_DNA-bd_dom_sf"/>
</dbReference>
<dbReference type="PANTHER" id="PTHR14057:SF32">
    <property type="entry name" value="HOMEOBOX PROTEIN CEH-21-RELATED"/>
    <property type="match status" value="1"/>
</dbReference>
<dbReference type="PANTHER" id="PTHR14057">
    <property type="entry name" value="TRANSCRIPTION FACTOR ONECUT"/>
    <property type="match status" value="1"/>
</dbReference>
<dbReference type="Pfam" id="PF02376">
    <property type="entry name" value="CUT"/>
    <property type="match status" value="1"/>
</dbReference>
<dbReference type="Pfam" id="PF00046">
    <property type="entry name" value="Homeodomain"/>
    <property type="match status" value="1"/>
</dbReference>
<dbReference type="SMART" id="SM01109">
    <property type="entry name" value="CUT"/>
    <property type="match status" value="1"/>
</dbReference>
<dbReference type="SMART" id="SM00389">
    <property type="entry name" value="HOX"/>
    <property type="match status" value="1"/>
</dbReference>
<dbReference type="SUPFAM" id="SSF46689">
    <property type="entry name" value="Homeodomain-like"/>
    <property type="match status" value="1"/>
</dbReference>
<dbReference type="SUPFAM" id="SSF47413">
    <property type="entry name" value="lambda repressor-like DNA-binding domains"/>
    <property type="match status" value="1"/>
</dbReference>
<dbReference type="PROSITE" id="PS51042">
    <property type="entry name" value="CUT"/>
    <property type="match status" value="1"/>
</dbReference>
<dbReference type="PROSITE" id="PS50071">
    <property type="entry name" value="HOMEOBOX_2"/>
    <property type="match status" value="1"/>
</dbReference>
<organism>
    <name type="scientific">Caenorhabditis elegans</name>
    <dbReference type="NCBI Taxonomy" id="6239"/>
    <lineage>
        <taxon>Eukaryota</taxon>
        <taxon>Metazoa</taxon>
        <taxon>Ecdysozoa</taxon>
        <taxon>Nematoda</taxon>
        <taxon>Chromadorea</taxon>
        <taxon>Rhabditida</taxon>
        <taxon>Rhabditina</taxon>
        <taxon>Rhabditomorpha</taxon>
        <taxon>Rhabditoidea</taxon>
        <taxon>Rhabditidae</taxon>
        <taxon>Peloderinae</taxon>
        <taxon>Caenorhabditis</taxon>
    </lineage>
</organism>
<sequence>MSQQFQASSGTGSASLREFKTEHEDLREDLPYSTLRTLFGITLDKDASQALNIALLLYGHNYPQQVVPPERNYAELDAQLESVVLEDHTAESTMEPGVSATVTEQLEEKSDKSSDGDGTSKRLTRSLKSVENETEEDHEEKEDEAPQSSRRESTRLKRKLLESQKTVQTTGNSSRASSKSQEKEVPGTKSQCAPKIRTTPEQSKAATKRQSSTTVRASSTCGSSVSSTSTVSSPDYTAKKGRATETPKLEELAPKKQSSATPKPGGEVCVWDGVQIGDLSAQMNAQIGDDEELDTVDIARRILSELKERCIPQTALAEKILARSQGTLSDLLRMPKPWSVMKNGRATFQRMSNWLGLDPDVRRALCFLPKEDVARITGLDEPTPAKRKKTVKVIRLTFTETQLKSLQKSFQQNHRPTREMRQKLSATLELDFSTVGNFFMNSRRRLRIDQQISRSSRSTGNGADTEDELDEEDVVVENVIADATDASNQPGPSHL</sequence>
<gene>
    <name type="primary">ceh-21</name>
    <name type="ORF">T26C11.6</name>
</gene>